<proteinExistence type="inferred from homology"/>
<reference key="1">
    <citation type="journal article" date="2001" name="Lancet">
        <title>Whole genome sequencing of meticillin-resistant Staphylococcus aureus.</title>
        <authorList>
            <person name="Kuroda M."/>
            <person name="Ohta T."/>
            <person name="Uchiyama I."/>
            <person name="Baba T."/>
            <person name="Yuzawa H."/>
            <person name="Kobayashi I."/>
            <person name="Cui L."/>
            <person name="Oguchi A."/>
            <person name="Aoki K."/>
            <person name="Nagai Y."/>
            <person name="Lian J.-Q."/>
            <person name="Ito T."/>
            <person name="Kanamori M."/>
            <person name="Matsumaru H."/>
            <person name="Maruyama A."/>
            <person name="Murakami H."/>
            <person name="Hosoyama A."/>
            <person name="Mizutani-Ui Y."/>
            <person name="Takahashi N.K."/>
            <person name="Sawano T."/>
            <person name="Inoue R."/>
            <person name="Kaito C."/>
            <person name="Sekimizu K."/>
            <person name="Hirakawa H."/>
            <person name="Kuhara S."/>
            <person name="Goto S."/>
            <person name="Yabuzaki J."/>
            <person name="Kanehisa M."/>
            <person name="Yamashita A."/>
            <person name="Oshima K."/>
            <person name="Furuya K."/>
            <person name="Yoshino C."/>
            <person name="Shiba T."/>
            <person name="Hattori M."/>
            <person name="Ogasawara N."/>
            <person name="Hayashi H."/>
            <person name="Hiramatsu K."/>
        </authorList>
    </citation>
    <scope>NUCLEOTIDE SEQUENCE [LARGE SCALE GENOMIC DNA]</scope>
    <source>
        <strain>N315</strain>
    </source>
</reference>
<keyword id="KW-1003">Cell membrane</keyword>
<keyword id="KW-0472">Membrane</keyword>
<keyword id="KW-0812">Transmembrane</keyword>
<keyword id="KW-1133">Transmembrane helix</keyword>
<comment type="subcellular location">
    <subcellularLocation>
        <location evidence="2">Cell membrane</location>
        <topology evidence="2">Single-pass membrane protein</topology>
    </subcellularLocation>
</comment>
<comment type="similarity">
    <text evidence="2">Belongs to the staphylococcal tandem lipoprotein family.</text>
</comment>
<feature type="chain" id="PRO_0000282137" description="Uncharacterized protein SA0203">
    <location>
        <begin position="1"/>
        <end position="257"/>
    </location>
</feature>
<feature type="transmembrane region" description="Helical" evidence="1">
    <location>
        <begin position="6"/>
        <end position="26"/>
    </location>
</feature>
<organism>
    <name type="scientific">Staphylococcus aureus (strain N315)</name>
    <dbReference type="NCBI Taxonomy" id="158879"/>
    <lineage>
        <taxon>Bacteria</taxon>
        <taxon>Bacillati</taxon>
        <taxon>Bacillota</taxon>
        <taxon>Bacilli</taxon>
        <taxon>Bacillales</taxon>
        <taxon>Staphylococcaceae</taxon>
        <taxon>Staphylococcus</taxon>
    </lineage>
</organism>
<protein>
    <recommendedName>
        <fullName>Uncharacterized protein SA0203</fullName>
    </recommendedName>
</protein>
<dbReference type="EMBL" id="BA000018">
    <property type="protein sequence ID" value="BAB41425.1"/>
    <property type="molecule type" value="Genomic_DNA"/>
</dbReference>
<dbReference type="PIR" id="F89783">
    <property type="entry name" value="F89783"/>
</dbReference>
<dbReference type="RefSeq" id="WP_000643619.1">
    <property type="nucleotide sequence ID" value="NC_002745.2"/>
</dbReference>
<dbReference type="SMR" id="Q99X12"/>
<dbReference type="EnsemblBacteria" id="BAB41425">
    <property type="protein sequence ID" value="BAB41425"/>
    <property type="gene ID" value="BAB41425"/>
</dbReference>
<dbReference type="KEGG" id="sau:SA0203"/>
<dbReference type="HOGENOM" id="CLU_071589_0_1_9"/>
<dbReference type="GO" id="GO:0005886">
    <property type="term" value="C:plasma membrane"/>
    <property type="evidence" value="ECO:0007669"/>
    <property type="project" value="UniProtKB-SubCell"/>
</dbReference>
<dbReference type="Gene3D" id="2.50.20.40">
    <property type="match status" value="1"/>
</dbReference>
<dbReference type="InterPro" id="IPR007595">
    <property type="entry name" value="Csa"/>
</dbReference>
<dbReference type="InterPro" id="IPR038641">
    <property type="entry name" value="Csa_sf"/>
</dbReference>
<dbReference type="NCBIfam" id="TIGR01742">
    <property type="entry name" value="SA_tandem_lipo"/>
    <property type="match status" value="1"/>
</dbReference>
<dbReference type="Pfam" id="PF04507">
    <property type="entry name" value="DUF576"/>
    <property type="match status" value="1"/>
</dbReference>
<name>Y203_STAAN</name>
<evidence type="ECO:0000255" key="1"/>
<evidence type="ECO:0000305" key="2"/>
<gene>
    <name type="ordered locus">SA0203</name>
</gene>
<accession>Q99X12</accession>
<sequence length="257" mass="29577">MKAHKIFWLNLAAIIIISIVVSGGMFLAMKWEQIHLKDGLKKVLSTYPIKNLETLYEIDGHDNPHYENNDQDTWYIESSYSVVGSDELLKEDRMLLKVDKNTHKITGEYDTTTNDRKDATDSTYKSYPVKVVNNKIVFTKDVKDPALKQKIENNQFLIQSGDLTSILNSNDLKVTHDPTTDYYNLSGKLSNDNPNVKQLKRRYNIPSNASTKVELKGMSDLKGNNHQDQKLYFYFSSPGKNQIIYKESLTYNKLSEH</sequence>